<reference key="1">
    <citation type="submission" date="2007-08" db="EMBL/GenBank/DDBJ databases">
        <authorList>
            <consortium name="The Citrobacter koseri Genome Sequencing Project"/>
            <person name="McClelland M."/>
            <person name="Sanderson E.K."/>
            <person name="Porwollik S."/>
            <person name="Spieth J."/>
            <person name="Clifton W.S."/>
            <person name="Latreille P."/>
            <person name="Courtney L."/>
            <person name="Wang C."/>
            <person name="Pepin K."/>
            <person name="Bhonagiri V."/>
            <person name="Nash W."/>
            <person name="Johnson M."/>
            <person name="Thiruvilangam P."/>
            <person name="Wilson R."/>
        </authorList>
    </citation>
    <scope>NUCLEOTIDE SEQUENCE [LARGE SCALE GENOMIC DNA]</scope>
    <source>
        <strain>ATCC BAA-895 / CDC 4225-83 / SGSC4696</strain>
    </source>
</reference>
<sequence>MSEKYVVTWDMLQIHARKLASRLMPSEQWKGIIAVSRGGLVPGALLARELGIRHVDTVCISSYDHDNQRELKVLKRAEGDGEGFIVIDDLVDTGGTAVAIREMYPKAHFVTIFAKPAGRPLVDDYVIDIPQDTWIEQPWDMGVVFVPPISGR</sequence>
<proteinExistence type="inferred from homology"/>
<protein>
    <recommendedName>
        <fullName evidence="1">Xanthine-guanine phosphoribosyltransferase</fullName>
        <shortName evidence="1">XGPRT</shortName>
        <ecNumber evidence="1">2.4.2.-</ecNumber>
        <ecNumber evidence="1">2.4.2.22</ecNumber>
    </recommendedName>
    <alternativeName>
        <fullName evidence="1">Xanthine phosphoribosyltransferase</fullName>
    </alternativeName>
</protein>
<name>XGPT_CITK8</name>
<keyword id="KW-0997">Cell inner membrane</keyword>
<keyword id="KW-1003">Cell membrane</keyword>
<keyword id="KW-0328">Glycosyltransferase</keyword>
<keyword id="KW-0460">Magnesium</keyword>
<keyword id="KW-0472">Membrane</keyword>
<keyword id="KW-0479">Metal-binding</keyword>
<keyword id="KW-0660">Purine salvage</keyword>
<keyword id="KW-1185">Reference proteome</keyword>
<keyword id="KW-0808">Transferase</keyword>
<organism>
    <name type="scientific">Citrobacter koseri (strain ATCC BAA-895 / CDC 4225-83 / SGSC4696)</name>
    <dbReference type="NCBI Taxonomy" id="290338"/>
    <lineage>
        <taxon>Bacteria</taxon>
        <taxon>Pseudomonadati</taxon>
        <taxon>Pseudomonadota</taxon>
        <taxon>Gammaproteobacteria</taxon>
        <taxon>Enterobacterales</taxon>
        <taxon>Enterobacteriaceae</taxon>
        <taxon>Citrobacter</taxon>
    </lineage>
</organism>
<dbReference type="EC" id="2.4.2.-" evidence="1"/>
<dbReference type="EC" id="2.4.2.22" evidence="1"/>
<dbReference type="EMBL" id="CP000822">
    <property type="protein sequence ID" value="ABV14063.1"/>
    <property type="molecule type" value="Genomic_DNA"/>
</dbReference>
<dbReference type="RefSeq" id="WP_006685917.1">
    <property type="nucleotide sequence ID" value="NC_009792.1"/>
</dbReference>
<dbReference type="SMR" id="A8AKQ0"/>
<dbReference type="STRING" id="290338.CKO_02958"/>
<dbReference type="GeneID" id="45136774"/>
<dbReference type="KEGG" id="cko:CKO_02958"/>
<dbReference type="HOGENOM" id="CLU_080904_3_0_6"/>
<dbReference type="OrthoDB" id="9789690at2"/>
<dbReference type="UniPathway" id="UPA00602">
    <property type="reaction ID" value="UER00658"/>
</dbReference>
<dbReference type="UniPathway" id="UPA00909">
    <property type="reaction ID" value="UER00887"/>
</dbReference>
<dbReference type="Proteomes" id="UP000008148">
    <property type="component" value="Chromosome"/>
</dbReference>
<dbReference type="GO" id="GO:0005829">
    <property type="term" value="C:cytosol"/>
    <property type="evidence" value="ECO:0007669"/>
    <property type="project" value="TreeGrafter"/>
</dbReference>
<dbReference type="GO" id="GO:0005886">
    <property type="term" value="C:plasma membrane"/>
    <property type="evidence" value="ECO:0007669"/>
    <property type="project" value="UniProtKB-SubCell"/>
</dbReference>
<dbReference type="GO" id="GO:0052657">
    <property type="term" value="F:guanine phosphoribosyltransferase activity"/>
    <property type="evidence" value="ECO:0007669"/>
    <property type="project" value="RHEA"/>
</dbReference>
<dbReference type="GO" id="GO:0004422">
    <property type="term" value="F:hypoxanthine phosphoribosyltransferase activity"/>
    <property type="evidence" value="ECO:0007669"/>
    <property type="project" value="TreeGrafter"/>
</dbReference>
<dbReference type="GO" id="GO:0000287">
    <property type="term" value="F:magnesium ion binding"/>
    <property type="evidence" value="ECO:0007669"/>
    <property type="project" value="UniProtKB-UniRule"/>
</dbReference>
<dbReference type="GO" id="GO:0000310">
    <property type="term" value="F:xanthine phosphoribosyltransferase activity"/>
    <property type="evidence" value="ECO:0007669"/>
    <property type="project" value="UniProtKB-UniRule"/>
</dbReference>
<dbReference type="GO" id="GO:0032263">
    <property type="term" value="P:GMP salvage"/>
    <property type="evidence" value="ECO:0007669"/>
    <property type="project" value="UniProtKB-UniRule"/>
</dbReference>
<dbReference type="GO" id="GO:0032264">
    <property type="term" value="P:IMP salvage"/>
    <property type="evidence" value="ECO:0007669"/>
    <property type="project" value="TreeGrafter"/>
</dbReference>
<dbReference type="GO" id="GO:0006166">
    <property type="term" value="P:purine ribonucleoside salvage"/>
    <property type="evidence" value="ECO:0007669"/>
    <property type="project" value="UniProtKB-KW"/>
</dbReference>
<dbReference type="GO" id="GO:0032265">
    <property type="term" value="P:XMP salvage"/>
    <property type="evidence" value="ECO:0007669"/>
    <property type="project" value="UniProtKB-UniRule"/>
</dbReference>
<dbReference type="CDD" id="cd06223">
    <property type="entry name" value="PRTases_typeI"/>
    <property type="match status" value="1"/>
</dbReference>
<dbReference type="FunFam" id="3.40.50.2020:FF:000009">
    <property type="entry name" value="Xanthine phosphoribosyltransferase"/>
    <property type="match status" value="1"/>
</dbReference>
<dbReference type="Gene3D" id="3.40.50.2020">
    <property type="match status" value="1"/>
</dbReference>
<dbReference type="HAMAP" id="MF_01903">
    <property type="entry name" value="XGPRT"/>
    <property type="match status" value="1"/>
</dbReference>
<dbReference type="InterPro" id="IPR000836">
    <property type="entry name" value="PRibTrfase_dom"/>
</dbReference>
<dbReference type="InterPro" id="IPR029057">
    <property type="entry name" value="PRTase-like"/>
</dbReference>
<dbReference type="InterPro" id="IPR023747">
    <property type="entry name" value="Xanthine_Guanine_PRibTrfase"/>
</dbReference>
<dbReference type="NCBIfam" id="NF006613">
    <property type="entry name" value="PRK09177.1"/>
    <property type="match status" value="1"/>
</dbReference>
<dbReference type="PANTHER" id="PTHR39563">
    <property type="entry name" value="XANTHINE PHOSPHORIBOSYLTRANSFERASE"/>
    <property type="match status" value="1"/>
</dbReference>
<dbReference type="PANTHER" id="PTHR39563:SF1">
    <property type="entry name" value="XANTHINE-GUANINE PHOSPHORIBOSYLTRANSFERASE"/>
    <property type="match status" value="1"/>
</dbReference>
<dbReference type="Pfam" id="PF00156">
    <property type="entry name" value="Pribosyltran"/>
    <property type="match status" value="1"/>
</dbReference>
<dbReference type="SUPFAM" id="SSF53271">
    <property type="entry name" value="PRTase-like"/>
    <property type="match status" value="1"/>
</dbReference>
<dbReference type="PROSITE" id="PS00103">
    <property type="entry name" value="PUR_PYR_PR_TRANSFER"/>
    <property type="match status" value="1"/>
</dbReference>
<comment type="function">
    <text evidence="1">Purine salvage pathway enzyme that catalyzes the transfer of the ribosyl-5-phosphate group from 5-phospho-alpha-D-ribose 1-diphosphate (PRPP) to the N9 position of the 6-oxopurines guanine and xanthine to form the corresponding ribonucleotides GMP (guanosine 5'-monophosphate) and XMP (xanthosine 5'-monophosphate), with the release of PPi. To a lesser extent, also acts on hypoxanthine.</text>
</comment>
<comment type="catalytic activity">
    <reaction evidence="1">
        <text>GMP + diphosphate = guanine + 5-phospho-alpha-D-ribose 1-diphosphate</text>
        <dbReference type="Rhea" id="RHEA:25424"/>
        <dbReference type="ChEBI" id="CHEBI:16235"/>
        <dbReference type="ChEBI" id="CHEBI:33019"/>
        <dbReference type="ChEBI" id="CHEBI:58017"/>
        <dbReference type="ChEBI" id="CHEBI:58115"/>
    </reaction>
    <physiologicalReaction direction="right-to-left" evidence="1">
        <dbReference type="Rhea" id="RHEA:25426"/>
    </physiologicalReaction>
</comment>
<comment type="catalytic activity">
    <reaction evidence="1">
        <text>XMP + diphosphate = xanthine + 5-phospho-alpha-D-ribose 1-diphosphate</text>
        <dbReference type="Rhea" id="RHEA:10800"/>
        <dbReference type="ChEBI" id="CHEBI:17712"/>
        <dbReference type="ChEBI" id="CHEBI:33019"/>
        <dbReference type="ChEBI" id="CHEBI:57464"/>
        <dbReference type="ChEBI" id="CHEBI:58017"/>
        <dbReference type="EC" id="2.4.2.22"/>
    </reaction>
    <physiologicalReaction direction="right-to-left" evidence="1">
        <dbReference type="Rhea" id="RHEA:10802"/>
    </physiologicalReaction>
</comment>
<comment type="catalytic activity">
    <reaction evidence="1">
        <text>IMP + diphosphate = hypoxanthine + 5-phospho-alpha-D-ribose 1-diphosphate</text>
        <dbReference type="Rhea" id="RHEA:17973"/>
        <dbReference type="ChEBI" id="CHEBI:17368"/>
        <dbReference type="ChEBI" id="CHEBI:33019"/>
        <dbReference type="ChEBI" id="CHEBI:58017"/>
        <dbReference type="ChEBI" id="CHEBI:58053"/>
    </reaction>
    <physiologicalReaction direction="right-to-left" evidence="1">
        <dbReference type="Rhea" id="RHEA:17975"/>
    </physiologicalReaction>
</comment>
<comment type="cofactor">
    <cofactor evidence="1">
        <name>Mg(2+)</name>
        <dbReference type="ChEBI" id="CHEBI:18420"/>
    </cofactor>
</comment>
<comment type="pathway">
    <text evidence="1">Purine metabolism; GMP biosynthesis via salvage pathway; GMP from guanine: step 1/1.</text>
</comment>
<comment type="pathway">
    <text evidence="1">Purine metabolism; XMP biosynthesis via salvage pathway; XMP from xanthine: step 1/1.</text>
</comment>
<comment type="subunit">
    <text evidence="1">Homotetramer.</text>
</comment>
<comment type="subcellular location">
    <subcellularLocation>
        <location evidence="1">Cell inner membrane</location>
        <topology evidence="1">Peripheral membrane protein</topology>
    </subcellularLocation>
</comment>
<comment type="similarity">
    <text evidence="1">Belongs to the purine/pyrimidine phosphoribosyltransferase family. XGPT subfamily.</text>
</comment>
<gene>
    <name evidence="1" type="primary">gpt</name>
    <name type="ordered locus">CKO_02958</name>
</gene>
<feature type="chain" id="PRO_1000070603" description="Xanthine-guanine phosphoribosyltransferase">
    <location>
        <begin position="1"/>
        <end position="152"/>
    </location>
</feature>
<feature type="binding site" evidence="1">
    <location>
        <begin position="37"/>
        <end position="38"/>
    </location>
    <ligand>
        <name>5-phospho-alpha-D-ribose 1-diphosphate</name>
        <dbReference type="ChEBI" id="CHEBI:58017"/>
    </ligand>
</feature>
<feature type="binding site" evidence="1">
    <location>
        <position position="69"/>
    </location>
    <ligand>
        <name>5-phospho-alpha-D-ribose 1-diphosphate</name>
        <dbReference type="ChEBI" id="CHEBI:58017"/>
    </ligand>
</feature>
<feature type="binding site" evidence="1">
    <location>
        <position position="69"/>
    </location>
    <ligand>
        <name>GMP</name>
        <dbReference type="ChEBI" id="CHEBI:58115"/>
    </ligand>
</feature>
<feature type="binding site" evidence="1">
    <location>
        <begin position="88"/>
        <end position="96"/>
    </location>
    <ligand>
        <name>5-phospho-alpha-D-ribose 1-diphosphate</name>
        <dbReference type="ChEBI" id="CHEBI:58017"/>
    </ligand>
</feature>
<feature type="binding site" evidence="1">
    <location>
        <position position="89"/>
    </location>
    <ligand>
        <name>Mg(2+)</name>
        <dbReference type="ChEBI" id="CHEBI:18420"/>
    </ligand>
</feature>
<feature type="binding site" evidence="1">
    <location>
        <begin position="92"/>
        <end position="96"/>
    </location>
    <ligand>
        <name>GMP</name>
        <dbReference type="ChEBI" id="CHEBI:58115"/>
    </ligand>
</feature>
<feature type="binding site" evidence="1">
    <location>
        <position position="92"/>
    </location>
    <ligand>
        <name>guanine</name>
        <dbReference type="ChEBI" id="CHEBI:16235"/>
    </ligand>
</feature>
<feature type="binding site" evidence="1">
    <location>
        <position position="92"/>
    </location>
    <ligand>
        <name>xanthine</name>
        <dbReference type="ChEBI" id="CHEBI:17712"/>
    </ligand>
</feature>
<feature type="binding site" evidence="1">
    <location>
        <begin position="134"/>
        <end position="135"/>
    </location>
    <ligand>
        <name>GMP</name>
        <dbReference type="ChEBI" id="CHEBI:58115"/>
    </ligand>
</feature>
<feature type="binding site" evidence="1">
    <location>
        <position position="135"/>
    </location>
    <ligand>
        <name>guanine</name>
        <dbReference type="ChEBI" id="CHEBI:16235"/>
    </ligand>
</feature>
<feature type="binding site" evidence="1">
    <location>
        <position position="135"/>
    </location>
    <ligand>
        <name>xanthine</name>
        <dbReference type="ChEBI" id="CHEBI:17712"/>
    </ligand>
</feature>
<accession>A8AKQ0</accession>
<evidence type="ECO:0000255" key="1">
    <source>
        <dbReference type="HAMAP-Rule" id="MF_01903"/>
    </source>
</evidence>